<proteinExistence type="inferred from homology"/>
<sequence>MSWQEKINAALDARRAADALRRRYPVAQGAGRWLVADDRQYLNFSSNDYLGLSHHPQIIRAWQQGAEQFGIGSGGSGHVSGYSVVHQALEEELAEWLGYSRALLFISGFAANQAVIAAMMAKEDRIAADRLSHASLLEAASLSPSQLRRFAHNDVTHLARLLASPCPGQQMVVTEGVFSMDGDSAPLAEIQQVTQQHNGWLMVDDAHGTGVIGEQGRGSCWLQKVKPELLVVTFGKGFGVSGAAVLCSSTVADYLLQFARHLIYSTSMPPAQAQALRASLAVIRSDEGDARREKLAALITRFRAGVQDLPFTLADSCSAIQPLIVGDNSRALQLAEKLRQQGCWVTAIRPPTVPAGTARLRLTLTAAHEMQDIDRLLEVLHGNG</sequence>
<keyword id="KW-0093">Biotin biosynthesis</keyword>
<keyword id="KW-0663">Pyridoxal phosphate</keyword>
<keyword id="KW-0808">Transferase</keyword>
<evidence type="ECO:0000255" key="1">
    <source>
        <dbReference type="HAMAP-Rule" id="MF_01693"/>
    </source>
</evidence>
<reference key="1">
    <citation type="journal article" date="2008" name="J. Bacteriol.">
        <title>The complete genome sequence of Escherichia coli DH10B: insights into the biology of a laboratory workhorse.</title>
        <authorList>
            <person name="Durfee T."/>
            <person name="Nelson R."/>
            <person name="Baldwin S."/>
            <person name="Plunkett G. III"/>
            <person name="Burland V."/>
            <person name="Mau B."/>
            <person name="Petrosino J.F."/>
            <person name="Qin X."/>
            <person name="Muzny D.M."/>
            <person name="Ayele M."/>
            <person name="Gibbs R.A."/>
            <person name="Csorgo B."/>
            <person name="Posfai G."/>
            <person name="Weinstock G.M."/>
            <person name="Blattner F.R."/>
        </authorList>
    </citation>
    <scope>NUCLEOTIDE SEQUENCE [LARGE SCALE GENOMIC DNA]</scope>
    <source>
        <strain>K12 / DH10B</strain>
    </source>
</reference>
<feature type="chain" id="PRO_0000380976" description="8-amino-7-oxononanoate synthase">
    <location>
        <begin position="1"/>
        <end position="384"/>
    </location>
</feature>
<feature type="binding site" evidence="1">
    <location>
        <position position="21"/>
    </location>
    <ligand>
        <name>substrate</name>
    </ligand>
</feature>
<feature type="binding site" evidence="1">
    <location>
        <begin position="108"/>
        <end position="109"/>
    </location>
    <ligand>
        <name>pyridoxal 5'-phosphate</name>
        <dbReference type="ChEBI" id="CHEBI:597326"/>
    </ligand>
</feature>
<feature type="binding site" evidence="1">
    <location>
        <position position="133"/>
    </location>
    <ligand>
        <name>substrate</name>
    </ligand>
</feature>
<feature type="binding site" evidence="1">
    <location>
        <position position="179"/>
    </location>
    <ligand>
        <name>pyridoxal 5'-phosphate</name>
        <dbReference type="ChEBI" id="CHEBI:597326"/>
    </ligand>
</feature>
<feature type="binding site" evidence="1">
    <location>
        <position position="207"/>
    </location>
    <ligand>
        <name>pyridoxal 5'-phosphate</name>
        <dbReference type="ChEBI" id="CHEBI:597326"/>
    </ligand>
</feature>
<feature type="binding site" evidence="1">
    <location>
        <position position="233"/>
    </location>
    <ligand>
        <name>pyridoxal 5'-phosphate</name>
        <dbReference type="ChEBI" id="CHEBI:597326"/>
    </ligand>
</feature>
<feature type="binding site" evidence="1">
    <location>
        <position position="352"/>
    </location>
    <ligand>
        <name>substrate</name>
    </ligand>
</feature>
<feature type="modified residue" description="N6-(pyridoxal phosphate)lysine" evidence="1">
    <location>
        <position position="236"/>
    </location>
</feature>
<name>BIOF_ECODH</name>
<gene>
    <name evidence="1" type="primary">bioF</name>
    <name type="ordered locus">ECDH10B_0844</name>
</gene>
<dbReference type="EC" id="2.3.1.47" evidence="1"/>
<dbReference type="EMBL" id="CP000948">
    <property type="protein sequence ID" value="ACB01977.1"/>
    <property type="molecule type" value="Genomic_DNA"/>
</dbReference>
<dbReference type="RefSeq" id="WP_000118826.1">
    <property type="nucleotide sequence ID" value="NC_010473.1"/>
</dbReference>
<dbReference type="SMR" id="B1X7A6"/>
<dbReference type="KEGG" id="ecd:ECDH10B_0844"/>
<dbReference type="HOGENOM" id="CLU_015846_11_2_6"/>
<dbReference type="UniPathway" id="UPA00078"/>
<dbReference type="GO" id="GO:0008710">
    <property type="term" value="F:8-amino-7-oxononanoate synthase activity"/>
    <property type="evidence" value="ECO:0007669"/>
    <property type="project" value="UniProtKB-UniRule"/>
</dbReference>
<dbReference type="GO" id="GO:0030170">
    <property type="term" value="F:pyridoxal phosphate binding"/>
    <property type="evidence" value="ECO:0007669"/>
    <property type="project" value="UniProtKB-UniRule"/>
</dbReference>
<dbReference type="GO" id="GO:0009102">
    <property type="term" value="P:biotin biosynthetic process"/>
    <property type="evidence" value="ECO:0007669"/>
    <property type="project" value="UniProtKB-UniRule"/>
</dbReference>
<dbReference type="CDD" id="cd06454">
    <property type="entry name" value="KBL_like"/>
    <property type="match status" value="1"/>
</dbReference>
<dbReference type="FunFam" id="3.40.640.10:FF:000095">
    <property type="entry name" value="8-amino-7-oxononanoate synthase"/>
    <property type="match status" value="1"/>
</dbReference>
<dbReference type="FunFam" id="3.90.1150.10:FF:000036">
    <property type="entry name" value="8-amino-7-oxononanoate synthase"/>
    <property type="match status" value="1"/>
</dbReference>
<dbReference type="Gene3D" id="3.90.1150.10">
    <property type="entry name" value="Aspartate Aminotransferase, domain 1"/>
    <property type="match status" value="1"/>
</dbReference>
<dbReference type="Gene3D" id="3.40.640.10">
    <property type="entry name" value="Type I PLP-dependent aspartate aminotransferase-like (Major domain)"/>
    <property type="match status" value="1"/>
</dbReference>
<dbReference type="HAMAP" id="MF_01693">
    <property type="entry name" value="BioF_aminotrans_2"/>
    <property type="match status" value="1"/>
</dbReference>
<dbReference type="InterPro" id="IPR001917">
    <property type="entry name" value="Aminotrans_II_pyridoxalP_BS"/>
</dbReference>
<dbReference type="InterPro" id="IPR004839">
    <property type="entry name" value="Aminotransferase_I/II_large"/>
</dbReference>
<dbReference type="InterPro" id="IPR050087">
    <property type="entry name" value="AON_synthase_class-II"/>
</dbReference>
<dbReference type="InterPro" id="IPR004723">
    <property type="entry name" value="AONS_Archaea/Proteobacteria"/>
</dbReference>
<dbReference type="InterPro" id="IPR022834">
    <property type="entry name" value="AONS_Proteobacteria"/>
</dbReference>
<dbReference type="InterPro" id="IPR015424">
    <property type="entry name" value="PyrdxlP-dep_Trfase"/>
</dbReference>
<dbReference type="InterPro" id="IPR015421">
    <property type="entry name" value="PyrdxlP-dep_Trfase_major"/>
</dbReference>
<dbReference type="InterPro" id="IPR015422">
    <property type="entry name" value="PyrdxlP-dep_Trfase_small"/>
</dbReference>
<dbReference type="NCBIfam" id="TIGR00858">
    <property type="entry name" value="bioF"/>
    <property type="match status" value="1"/>
</dbReference>
<dbReference type="PANTHER" id="PTHR13693:SF100">
    <property type="entry name" value="8-AMINO-7-OXONONANOATE SYNTHASE"/>
    <property type="match status" value="1"/>
</dbReference>
<dbReference type="PANTHER" id="PTHR13693">
    <property type="entry name" value="CLASS II AMINOTRANSFERASE/8-AMINO-7-OXONONANOATE SYNTHASE"/>
    <property type="match status" value="1"/>
</dbReference>
<dbReference type="Pfam" id="PF00155">
    <property type="entry name" value="Aminotran_1_2"/>
    <property type="match status" value="1"/>
</dbReference>
<dbReference type="SUPFAM" id="SSF53383">
    <property type="entry name" value="PLP-dependent transferases"/>
    <property type="match status" value="1"/>
</dbReference>
<dbReference type="PROSITE" id="PS00599">
    <property type="entry name" value="AA_TRANSFER_CLASS_2"/>
    <property type="match status" value="1"/>
</dbReference>
<accession>B1X7A6</accession>
<organism>
    <name type="scientific">Escherichia coli (strain K12 / DH10B)</name>
    <dbReference type="NCBI Taxonomy" id="316385"/>
    <lineage>
        <taxon>Bacteria</taxon>
        <taxon>Pseudomonadati</taxon>
        <taxon>Pseudomonadota</taxon>
        <taxon>Gammaproteobacteria</taxon>
        <taxon>Enterobacterales</taxon>
        <taxon>Enterobacteriaceae</taxon>
        <taxon>Escherichia</taxon>
    </lineage>
</organism>
<comment type="function">
    <text evidence="1">Catalyzes the decarboxylative condensation of pimeloyl-[acyl-carrier protein] and L-alanine to produce 8-amino-7-oxononanoate (AON), [acyl-carrier protein], and carbon dioxide.</text>
</comment>
<comment type="catalytic activity">
    <reaction evidence="1">
        <text>6-carboxyhexanoyl-[ACP] + L-alanine + H(+) = (8S)-8-amino-7-oxononanoate + holo-[ACP] + CO2</text>
        <dbReference type="Rhea" id="RHEA:42288"/>
        <dbReference type="Rhea" id="RHEA-COMP:9685"/>
        <dbReference type="Rhea" id="RHEA-COMP:9955"/>
        <dbReference type="ChEBI" id="CHEBI:15378"/>
        <dbReference type="ChEBI" id="CHEBI:16526"/>
        <dbReference type="ChEBI" id="CHEBI:57972"/>
        <dbReference type="ChEBI" id="CHEBI:64479"/>
        <dbReference type="ChEBI" id="CHEBI:78846"/>
        <dbReference type="ChEBI" id="CHEBI:149468"/>
        <dbReference type="EC" id="2.3.1.47"/>
    </reaction>
</comment>
<comment type="cofactor">
    <cofactor evidence="1">
        <name>pyridoxal 5'-phosphate</name>
        <dbReference type="ChEBI" id="CHEBI:597326"/>
    </cofactor>
</comment>
<comment type="pathway">
    <text evidence="1">Cofactor biosynthesis; biotin biosynthesis.</text>
</comment>
<comment type="subunit">
    <text evidence="1">Homodimer.</text>
</comment>
<comment type="similarity">
    <text evidence="1">Belongs to the class-II pyridoxal-phosphate-dependent aminotransferase family. BioF subfamily.</text>
</comment>
<protein>
    <recommendedName>
        <fullName evidence="1">8-amino-7-oxononanoate synthase</fullName>
        <shortName evidence="1">AONS</shortName>
        <ecNumber evidence="1">2.3.1.47</ecNumber>
    </recommendedName>
    <alternativeName>
        <fullName evidence="1">7-keto-8-amino-pelargonic acid synthase</fullName>
        <shortName evidence="1">7-KAP synthase</shortName>
        <shortName evidence="1">KAPA synthase</shortName>
    </alternativeName>
    <alternativeName>
        <fullName evidence="1">8-amino-7-ketopelargonate synthase</fullName>
    </alternativeName>
</protein>